<feature type="chain" id="PRO_0000074071" description="GDP-mannose 6-dehydrogenase">
    <location>
        <begin position="1"/>
        <end position="438"/>
    </location>
</feature>
<feature type="active site" evidence="1">
    <location>
        <position position="268"/>
    </location>
</feature>
<feature type="binding site" description="in chain A" evidence="2">
    <location>
        <position position="10"/>
    </location>
    <ligand>
        <name>NAD(+)</name>
        <dbReference type="ChEBI" id="CHEBI:57540"/>
        <note>ligand shared between homodimeric partners</note>
    </ligand>
</feature>
<feature type="binding site" description="in chain A" evidence="2">
    <location>
        <position position="11"/>
    </location>
    <ligand>
        <name>NAD(+)</name>
        <dbReference type="ChEBI" id="CHEBI:57540"/>
        <note>ligand shared between homodimeric partners</note>
    </ligand>
</feature>
<feature type="binding site" description="in chain A" evidence="2">
    <location>
        <position position="30"/>
    </location>
    <ligand>
        <name>NAD(+)</name>
        <dbReference type="ChEBI" id="CHEBI:57540"/>
        <note>ligand shared between homodimeric partners</note>
    </ligand>
</feature>
<feature type="binding site" description="in chain A" evidence="2">
    <location>
        <position position="35"/>
    </location>
    <ligand>
        <name>NAD(+)</name>
        <dbReference type="ChEBI" id="CHEBI:57540"/>
        <note>ligand shared between homodimeric partners</note>
    </ligand>
</feature>
<feature type="binding site" description="in chain A" evidence="2">
    <location>
        <position position="86"/>
    </location>
    <ligand>
        <name>NAD(+)</name>
        <dbReference type="ChEBI" id="CHEBI:57540"/>
        <note>ligand shared between homodimeric partners</note>
    </ligand>
</feature>
<feature type="binding site" description="in chain A" evidence="2">
    <location>
        <position position="124"/>
    </location>
    <ligand>
        <name>NAD(+)</name>
        <dbReference type="ChEBI" id="CHEBI:57540"/>
        <note>ligand shared between homodimeric partners</note>
    </ligand>
</feature>
<feature type="binding site" description="in chain A" evidence="2">
    <location>
        <position position="161"/>
    </location>
    <ligand>
        <name>GDP-alpha-D-mannuronate</name>
        <dbReference type="ChEBI" id="CHEBI:84886"/>
        <note>ligand shared between homodimeric partners</note>
    </ligand>
</feature>
<feature type="binding site" description="in chain A" evidence="2">
    <location>
        <position position="210"/>
    </location>
    <ligand>
        <name>GDP-alpha-D-mannuronate</name>
        <dbReference type="ChEBI" id="CHEBI:84886"/>
        <note>ligand shared between homodimeric partners</note>
    </ligand>
</feature>
<feature type="binding site" description="in chain A" evidence="2">
    <location>
        <position position="214"/>
    </location>
    <ligand>
        <name>GDP-alpha-D-mannuronate</name>
        <dbReference type="ChEBI" id="CHEBI:84886"/>
        <note>ligand shared between homodimeric partners</note>
    </ligand>
</feature>
<feature type="binding site" description="in chain A" evidence="2">
    <location>
        <position position="217"/>
    </location>
    <ligand>
        <name>GDP-alpha-D-mannuronate</name>
        <dbReference type="ChEBI" id="CHEBI:84886"/>
        <note>ligand shared between homodimeric partners</note>
    </ligand>
</feature>
<feature type="binding site" description="in chain A" evidence="2">
    <location>
        <position position="225"/>
    </location>
    <ligand>
        <name>GDP-alpha-D-mannuronate</name>
        <dbReference type="ChEBI" id="CHEBI:84886"/>
        <note>ligand shared between homodimeric partners</note>
    </ligand>
</feature>
<feature type="binding site" description="in chain B" evidence="2">
    <location>
        <position position="256"/>
    </location>
    <ligand>
        <name>GDP-alpha-D-mannuronate</name>
        <dbReference type="ChEBI" id="CHEBI:84886"/>
        <note>ligand shared between homodimeric partners</note>
    </ligand>
</feature>
<feature type="binding site" description="in chain B" evidence="2">
    <location>
        <position position="257"/>
    </location>
    <ligand>
        <name>GDP-alpha-D-mannuronate</name>
        <dbReference type="ChEBI" id="CHEBI:84886"/>
        <note>ligand shared between homodimeric partners</note>
    </ligand>
</feature>
<feature type="binding site" description="in chain B" evidence="2">
    <location>
        <position position="259"/>
    </location>
    <ligand>
        <name>GDP-alpha-D-mannuronate</name>
        <dbReference type="ChEBI" id="CHEBI:84886"/>
        <note>ligand shared between homodimeric partners</note>
    </ligand>
</feature>
<feature type="binding site" description="in chain B" evidence="2">
    <location>
        <position position="262"/>
    </location>
    <ligand>
        <name>GDP-alpha-D-mannuronate</name>
        <dbReference type="ChEBI" id="CHEBI:84886"/>
        <note>ligand shared between homodimeric partners</note>
    </ligand>
</feature>
<feature type="binding site" description="in chain B" evidence="2">
    <location>
        <position position="265"/>
    </location>
    <ligand>
        <name>GDP-alpha-D-mannuronate</name>
        <dbReference type="ChEBI" id="CHEBI:84886"/>
        <note>ligand shared between homodimeric partners</note>
    </ligand>
</feature>
<feature type="binding site" description="in chain B" evidence="2">
    <location>
        <position position="271"/>
    </location>
    <ligand>
        <name>NAD(+)</name>
        <dbReference type="ChEBI" id="CHEBI:57540"/>
        <note>ligand shared between homodimeric partners</note>
    </ligand>
</feature>
<feature type="binding site" description="in chain B" evidence="2">
    <location>
        <position position="324"/>
    </location>
    <ligand>
        <name>GDP-alpha-D-mannuronate</name>
        <dbReference type="ChEBI" id="CHEBI:84886"/>
        <note>ligand shared between homodimeric partners</note>
    </ligand>
</feature>
<feature type="binding site" description="in chain B" evidence="2">
    <location>
        <position position="331"/>
    </location>
    <ligand>
        <name>NAD(+)</name>
        <dbReference type="ChEBI" id="CHEBI:57540"/>
        <note>ligand shared between homodimeric partners</note>
    </ligand>
</feature>
<protein>
    <recommendedName>
        <fullName>GDP-mannose 6-dehydrogenase</fullName>
        <shortName>GMD</shortName>
        <ecNumber>1.1.1.132</ecNumber>
    </recommendedName>
</protein>
<organism>
    <name type="scientific">Pseudomonas syringae pv. syringae</name>
    <dbReference type="NCBI Taxonomy" id="321"/>
    <lineage>
        <taxon>Bacteria</taxon>
        <taxon>Pseudomonadati</taxon>
        <taxon>Pseudomonadota</taxon>
        <taxon>Gammaproteobacteria</taxon>
        <taxon>Pseudomonadales</taxon>
        <taxon>Pseudomonadaceae</taxon>
        <taxon>Pseudomonas</taxon>
        <taxon>Pseudomonas syringae</taxon>
    </lineage>
</organism>
<accession>P59793</accession>
<name>ALGD_PSESY</name>
<dbReference type="EC" id="1.1.1.132"/>
<dbReference type="EMBL" id="AY095347">
    <property type="protein sequence ID" value="AAM23311.1"/>
    <property type="molecule type" value="Genomic_DNA"/>
</dbReference>
<dbReference type="SMR" id="P59793"/>
<dbReference type="UniPathway" id="UPA00286"/>
<dbReference type="GO" id="GO:0047919">
    <property type="term" value="F:GDP-mannose 6-dehydrogenase activity"/>
    <property type="evidence" value="ECO:0007669"/>
    <property type="project" value="UniProtKB-EC"/>
</dbReference>
<dbReference type="GO" id="GO:0051287">
    <property type="term" value="F:NAD binding"/>
    <property type="evidence" value="ECO:0007669"/>
    <property type="project" value="InterPro"/>
</dbReference>
<dbReference type="GO" id="GO:0042121">
    <property type="term" value="P:alginic acid biosynthetic process"/>
    <property type="evidence" value="ECO:0007669"/>
    <property type="project" value="UniProtKB-UniPathway"/>
</dbReference>
<dbReference type="Gene3D" id="1.20.5.170">
    <property type="match status" value="1"/>
</dbReference>
<dbReference type="Gene3D" id="3.40.50.720">
    <property type="entry name" value="NAD(P)-binding Rossmann-like Domain"/>
    <property type="match status" value="2"/>
</dbReference>
<dbReference type="InterPro" id="IPR008927">
    <property type="entry name" value="6-PGluconate_DH-like_C_sf"/>
</dbReference>
<dbReference type="InterPro" id="IPR028358">
    <property type="entry name" value="GDPman_DH"/>
</dbReference>
<dbReference type="InterPro" id="IPR036291">
    <property type="entry name" value="NAD(P)-bd_dom_sf"/>
</dbReference>
<dbReference type="InterPro" id="IPR017476">
    <property type="entry name" value="UDP-Glc/GDP-Man"/>
</dbReference>
<dbReference type="InterPro" id="IPR014027">
    <property type="entry name" value="UDP-Glc/GDP-Man_DH_C"/>
</dbReference>
<dbReference type="InterPro" id="IPR036220">
    <property type="entry name" value="UDP-Glc/GDP-Man_DH_C_sf"/>
</dbReference>
<dbReference type="InterPro" id="IPR014026">
    <property type="entry name" value="UDP-Glc/GDP-Man_DH_dimer"/>
</dbReference>
<dbReference type="InterPro" id="IPR001732">
    <property type="entry name" value="UDP-Glc/GDP-Man_DH_N"/>
</dbReference>
<dbReference type="NCBIfam" id="TIGR03026">
    <property type="entry name" value="NDP-sugDHase"/>
    <property type="match status" value="1"/>
</dbReference>
<dbReference type="PANTHER" id="PTHR43750:SF1">
    <property type="entry name" value="GDP-MANNOSE 6-DEHYDROGENASE"/>
    <property type="match status" value="1"/>
</dbReference>
<dbReference type="PANTHER" id="PTHR43750">
    <property type="entry name" value="UDP-GLUCOSE 6-DEHYDROGENASE TUAD"/>
    <property type="match status" value="1"/>
</dbReference>
<dbReference type="Pfam" id="PF00984">
    <property type="entry name" value="UDPG_MGDP_dh"/>
    <property type="match status" value="1"/>
</dbReference>
<dbReference type="Pfam" id="PF03720">
    <property type="entry name" value="UDPG_MGDP_dh_C"/>
    <property type="match status" value="1"/>
</dbReference>
<dbReference type="Pfam" id="PF03721">
    <property type="entry name" value="UDPG_MGDP_dh_N"/>
    <property type="match status" value="1"/>
</dbReference>
<dbReference type="PIRSF" id="PIRSF500135">
    <property type="entry name" value="GDPman_DH"/>
    <property type="match status" value="1"/>
</dbReference>
<dbReference type="PIRSF" id="PIRSF000124">
    <property type="entry name" value="UDPglc_GDPman_dh"/>
    <property type="match status" value="1"/>
</dbReference>
<dbReference type="SMART" id="SM00984">
    <property type="entry name" value="UDPG_MGDP_dh_C"/>
    <property type="match status" value="1"/>
</dbReference>
<dbReference type="SUPFAM" id="SSF48179">
    <property type="entry name" value="6-phosphogluconate dehydrogenase C-terminal domain-like"/>
    <property type="match status" value="1"/>
</dbReference>
<dbReference type="SUPFAM" id="SSF51735">
    <property type="entry name" value="NAD(P)-binding Rossmann-fold domains"/>
    <property type="match status" value="1"/>
</dbReference>
<dbReference type="SUPFAM" id="SSF52413">
    <property type="entry name" value="UDP-glucose/GDP-mannose dehydrogenase C-terminal domain"/>
    <property type="match status" value="1"/>
</dbReference>
<evidence type="ECO:0000250" key="1"/>
<evidence type="ECO:0000250" key="2">
    <source>
        <dbReference type="UniProtKB" id="P11759"/>
    </source>
</evidence>
<evidence type="ECO:0000305" key="3"/>
<sequence length="438" mass="47519">MRISIFGLGYVGAVCAGCLSARGHEVVGVDISSTKIDLINNGKSPIVEPGLEELLQKGISTGKLRGTTDFAEAIRATDLSMICVGTPSKKNGDLELDYIESVCREIGYVLRDKATRHTIVVRSTVLPGTVANVVIPILEDCSGKKAGVDFGVAVNPEFLRESTAIKDYDLPPMTVIGEFDKASGDVLQSLYEELDAPIIRKDIAVAEMIKYTCNVWHATKVTFANEIGNIAKAVGVDGREVMDVVCQDKALNLSQYYMRPGFAFGGSCLPKDVRALTYRAGSLDVEAPLLNSLMRSNTSQVQNAFDMVASYDARKVALLGLSFKAGTDDLRESPLVELAEMLIGKGFDLSIFDSNVEYARVHGANKDYIESKIPHVSSLLNSDFDQVINDSDVIILGNRDERFRALANKTPEGKRVIDLVGFMANATSEDGRAEGICW</sequence>
<gene>
    <name type="primary">algD</name>
</gene>
<comment type="function">
    <text evidence="1">Catalyzes the oxidation of guanosine diphospho-D-mannose (GDP-D-mannose) to GDP-D-mannuronic acid, a precursor for alginate polymerization. The alginate layer causes a mucoid phenotype and provides a protective barrier against host immune defenses and antibiotics (By similarity).</text>
</comment>
<comment type="catalytic activity">
    <reaction>
        <text>GDP-alpha-D-mannose + 2 NAD(+) + H2O = GDP-alpha-D-mannuronate + 2 NADH + 3 H(+)</text>
        <dbReference type="Rhea" id="RHEA:21728"/>
        <dbReference type="ChEBI" id="CHEBI:15377"/>
        <dbReference type="ChEBI" id="CHEBI:15378"/>
        <dbReference type="ChEBI" id="CHEBI:57527"/>
        <dbReference type="ChEBI" id="CHEBI:57540"/>
        <dbReference type="ChEBI" id="CHEBI:57945"/>
        <dbReference type="ChEBI" id="CHEBI:84886"/>
        <dbReference type="EC" id="1.1.1.132"/>
    </reaction>
</comment>
<comment type="pathway">
    <text>Glycan biosynthesis; alginate biosynthesis.</text>
</comment>
<comment type="similarity">
    <text evidence="3">Belongs to the UDP-glucose/GDP-mannose dehydrogenase family.</text>
</comment>
<proteinExistence type="inferred from homology"/>
<reference key="1">
    <citation type="submission" date="2002-04" db="EMBL/GenBank/DDBJ databases">
        <title>Comparative analysis of the algD promoter, gene and protein from Pseudomonas syringae, Pseudomonas aeruginosa, and Azotobacter vinelandii.</title>
        <authorList>
            <person name="Keith R.C."/>
            <person name="Keith L.M."/>
            <person name="Bender C.L."/>
        </authorList>
    </citation>
    <scope>NUCLEOTIDE SEQUENCE [GENOMIC DNA]</scope>
    <source>
        <strain>FF5</strain>
    </source>
</reference>
<keyword id="KW-0016">Alginate biosynthesis</keyword>
<keyword id="KW-0520">NAD</keyword>
<keyword id="KW-0560">Oxidoreductase</keyword>